<accession>Q2W3R9</accession>
<gene>
    <name evidence="1" type="primary">thiG</name>
    <name type="ordered locus">amb2702</name>
</gene>
<reference key="1">
    <citation type="journal article" date="2005" name="DNA Res.">
        <title>Complete genome sequence of the facultative anaerobic magnetotactic bacterium Magnetospirillum sp. strain AMB-1.</title>
        <authorList>
            <person name="Matsunaga T."/>
            <person name="Okamura Y."/>
            <person name="Fukuda Y."/>
            <person name="Wahyudi A.T."/>
            <person name="Murase Y."/>
            <person name="Takeyama H."/>
        </authorList>
    </citation>
    <scope>NUCLEOTIDE SEQUENCE [LARGE SCALE GENOMIC DNA]</scope>
    <source>
        <strain>ATCC 700264 / AMB-1</strain>
    </source>
</reference>
<keyword id="KW-0963">Cytoplasm</keyword>
<keyword id="KW-0704">Schiff base</keyword>
<keyword id="KW-0784">Thiamine biosynthesis</keyword>
<keyword id="KW-0808">Transferase</keyword>
<organism>
    <name type="scientific">Paramagnetospirillum magneticum (strain ATCC 700264 / AMB-1)</name>
    <name type="common">Magnetospirillum magneticum</name>
    <dbReference type="NCBI Taxonomy" id="342108"/>
    <lineage>
        <taxon>Bacteria</taxon>
        <taxon>Pseudomonadati</taxon>
        <taxon>Pseudomonadota</taxon>
        <taxon>Alphaproteobacteria</taxon>
        <taxon>Rhodospirillales</taxon>
        <taxon>Magnetospirillaceae</taxon>
        <taxon>Paramagnetospirillum</taxon>
    </lineage>
</organism>
<protein>
    <recommendedName>
        <fullName evidence="1">Thiazole synthase</fullName>
        <ecNumber evidence="1">2.8.1.10</ecNumber>
    </recommendedName>
</protein>
<sequence length="324" mass="34442">MKLVINGEERNFSASMTVEALLGELGVDSRKVAVERNLEIVPKSSYAQVAVNDGDKLEIVAFIGGGSDQADSFTVAGKTFNSRLLVGTGKYKDFEETALAIEASGAEIVTVAVRRVNLSDPSKPMLVDYVSPKKYTFLPNTAGCYTADDSVRTLRLAREAGGWNLVKLEVLGDQTTLYPNMPETLKAAEALIKDGFEVMVYCSDDPIQAKMLEDMGCVAIMPLGSLIGSGLGILNPTTIRIIKDTVKVPVLVDAGVGTASDAALAMELGCDGVLMNTAIAHAKDPIRMARAMKLAIEAGRLSYLAGRMPKKSYADPSSPTSGLI</sequence>
<dbReference type="EC" id="2.8.1.10" evidence="1"/>
<dbReference type="EMBL" id="AP007255">
    <property type="protein sequence ID" value="BAE51506.1"/>
    <property type="molecule type" value="Genomic_DNA"/>
</dbReference>
<dbReference type="RefSeq" id="WP_011385082.1">
    <property type="nucleotide sequence ID" value="NC_007626.1"/>
</dbReference>
<dbReference type="SMR" id="Q2W3R9"/>
<dbReference type="STRING" id="342108.amb2702"/>
<dbReference type="KEGG" id="mag:amb2702"/>
<dbReference type="HOGENOM" id="CLU_062233_1_1_5"/>
<dbReference type="OrthoDB" id="9805935at2"/>
<dbReference type="UniPathway" id="UPA00060"/>
<dbReference type="Proteomes" id="UP000007058">
    <property type="component" value="Chromosome"/>
</dbReference>
<dbReference type="GO" id="GO:0005737">
    <property type="term" value="C:cytoplasm"/>
    <property type="evidence" value="ECO:0007669"/>
    <property type="project" value="UniProtKB-SubCell"/>
</dbReference>
<dbReference type="GO" id="GO:1990107">
    <property type="term" value="F:thiazole synthase activity"/>
    <property type="evidence" value="ECO:0007669"/>
    <property type="project" value="UniProtKB-EC"/>
</dbReference>
<dbReference type="GO" id="GO:0009229">
    <property type="term" value="P:thiamine diphosphate biosynthetic process"/>
    <property type="evidence" value="ECO:0007669"/>
    <property type="project" value="UniProtKB-UniRule"/>
</dbReference>
<dbReference type="CDD" id="cd04728">
    <property type="entry name" value="ThiG"/>
    <property type="match status" value="1"/>
</dbReference>
<dbReference type="CDD" id="cd00565">
    <property type="entry name" value="Ubl_ThiS"/>
    <property type="match status" value="1"/>
</dbReference>
<dbReference type="Gene3D" id="3.10.20.30">
    <property type="match status" value="1"/>
</dbReference>
<dbReference type="Gene3D" id="3.20.20.70">
    <property type="entry name" value="Aldolase class I"/>
    <property type="match status" value="1"/>
</dbReference>
<dbReference type="HAMAP" id="MF_00443">
    <property type="entry name" value="ThiG"/>
    <property type="match status" value="1"/>
</dbReference>
<dbReference type="InterPro" id="IPR013785">
    <property type="entry name" value="Aldolase_TIM"/>
</dbReference>
<dbReference type="InterPro" id="IPR012675">
    <property type="entry name" value="Beta-grasp_dom_sf"/>
</dbReference>
<dbReference type="InterPro" id="IPR016155">
    <property type="entry name" value="Mopterin_synth/thiamin_S_b"/>
</dbReference>
<dbReference type="InterPro" id="IPR010035">
    <property type="entry name" value="Thi_S"/>
</dbReference>
<dbReference type="InterPro" id="IPR033983">
    <property type="entry name" value="Thiazole_synthase_ThiG"/>
</dbReference>
<dbReference type="InterPro" id="IPR008867">
    <property type="entry name" value="ThiG"/>
</dbReference>
<dbReference type="InterPro" id="IPR003749">
    <property type="entry name" value="ThiS/MoaD-like"/>
</dbReference>
<dbReference type="NCBIfam" id="TIGR01683">
    <property type="entry name" value="thiS"/>
    <property type="match status" value="1"/>
</dbReference>
<dbReference type="PANTHER" id="PTHR34266">
    <property type="entry name" value="THIAZOLE SYNTHASE"/>
    <property type="match status" value="1"/>
</dbReference>
<dbReference type="PANTHER" id="PTHR34266:SF2">
    <property type="entry name" value="THIAZOLE SYNTHASE"/>
    <property type="match status" value="1"/>
</dbReference>
<dbReference type="Pfam" id="PF05690">
    <property type="entry name" value="ThiG"/>
    <property type="match status" value="1"/>
</dbReference>
<dbReference type="Pfam" id="PF02597">
    <property type="entry name" value="ThiS"/>
    <property type="match status" value="1"/>
</dbReference>
<dbReference type="SUPFAM" id="SSF54285">
    <property type="entry name" value="MoaD/ThiS"/>
    <property type="match status" value="1"/>
</dbReference>
<dbReference type="SUPFAM" id="SSF110399">
    <property type="entry name" value="ThiG-like"/>
    <property type="match status" value="1"/>
</dbReference>
<evidence type="ECO:0000255" key="1">
    <source>
        <dbReference type="HAMAP-Rule" id="MF_00443"/>
    </source>
</evidence>
<feature type="chain" id="PRO_0000236343" description="Thiazole synthase">
    <location>
        <begin position="1"/>
        <end position="324"/>
    </location>
</feature>
<feature type="active site" description="Schiff-base intermediate with DXP" evidence="1">
    <location>
        <position position="167"/>
    </location>
</feature>
<feature type="binding site" evidence="1">
    <location>
        <position position="228"/>
    </location>
    <ligand>
        <name>1-deoxy-D-xylulose 5-phosphate</name>
        <dbReference type="ChEBI" id="CHEBI:57792"/>
    </ligand>
</feature>
<feature type="binding site" evidence="1">
    <location>
        <begin position="254"/>
        <end position="255"/>
    </location>
    <ligand>
        <name>1-deoxy-D-xylulose 5-phosphate</name>
        <dbReference type="ChEBI" id="CHEBI:57792"/>
    </ligand>
</feature>
<feature type="binding site" evidence="1">
    <location>
        <begin position="276"/>
        <end position="277"/>
    </location>
    <ligand>
        <name>1-deoxy-D-xylulose 5-phosphate</name>
        <dbReference type="ChEBI" id="CHEBI:57792"/>
    </ligand>
</feature>
<proteinExistence type="inferred from homology"/>
<name>THIG_PARM1</name>
<comment type="function">
    <text evidence="1">Catalyzes the rearrangement of 1-deoxy-D-xylulose 5-phosphate (DXP) to produce the thiazole phosphate moiety of thiamine. Sulfur is provided by the thiocarboxylate moiety of the carrier protein ThiS. In vitro, sulfur can be provided by H(2)S.</text>
</comment>
<comment type="catalytic activity">
    <reaction evidence="1">
        <text>[ThiS sulfur-carrier protein]-C-terminal-Gly-aminoethanethioate + 2-iminoacetate + 1-deoxy-D-xylulose 5-phosphate = [ThiS sulfur-carrier protein]-C-terminal Gly-Gly + 2-[(2R,5Z)-2-carboxy-4-methylthiazol-5(2H)-ylidene]ethyl phosphate + 2 H2O + H(+)</text>
        <dbReference type="Rhea" id="RHEA:26297"/>
        <dbReference type="Rhea" id="RHEA-COMP:12909"/>
        <dbReference type="Rhea" id="RHEA-COMP:19908"/>
        <dbReference type="ChEBI" id="CHEBI:15377"/>
        <dbReference type="ChEBI" id="CHEBI:15378"/>
        <dbReference type="ChEBI" id="CHEBI:57792"/>
        <dbReference type="ChEBI" id="CHEBI:62899"/>
        <dbReference type="ChEBI" id="CHEBI:77846"/>
        <dbReference type="ChEBI" id="CHEBI:90778"/>
        <dbReference type="ChEBI" id="CHEBI:232372"/>
        <dbReference type="EC" id="2.8.1.10"/>
    </reaction>
</comment>
<comment type="pathway">
    <text evidence="1">Cofactor biosynthesis; thiamine diphosphate biosynthesis.</text>
</comment>
<comment type="subunit">
    <text evidence="1">Homotetramer. Forms heterodimers with either ThiH or ThiS.</text>
</comment>
<comment type="subcellular location">
    <subcellularLocation>
        <location evidence="1">Cytoplasm</location>
    </subcellularLocation>
</comment>
<comment type="similarity">
    <text evidence="1">Belongs to the ThiG family.</text>
</comment>